<feature type="signal peptide" evidence="3">
    <location>
        <begin position="1"/>
        <end position="23"/>
    </location>
</feature>
<feature type="peptide" id="PRO_0000366099" description="Non-disulfide-bridged peptide 5.6" evidence="7">
    <location>
        <begin position="24"/>
        <end position="33"/>
    </location>
</feature>
<feature type="propeptide" id="PRO_0000366100" evidence="7">
    <location>
        <begin position="37"/>
        <end position="68"/>
    </location>
</feature>
<name>NDB4T_HOFGE</name>
<protein>
    <recommendedName>
        <fullName evidence="5">Non-disulfide-bridged peptide 5.6</fullName>
        <shortName evidence="5">NDBP-5.6</shortName>
    </recommendedName>
</protein>
<proteinExistence type="evidence at transcript level"/>
<evidence type="ECO:0000250" key="1"/>
<evidence type="ECO:0000250" key="2">
    <source>
        <dbReference type="UniProtKB" id="I0DEB6"/>
    </source>
</evidence>
<evidence type="ECO:0000255" key="3"/>
<evidence type="ECO:0000269" key="4">
    <source>
    </source>
</evidence>
<evidence type="ECO:0000303" key="5">
    <source>
    </source>
</evidence>
<evidence type="ECO:0000305" key="6"/>
<evidence type="ECO:0000305" key="7">
    <source>
    </source>
</evidence>
<evidence type="ECO:0000312" key="8">
    <source>
        <dbReference type="EMBL" id="EL698902"/>
    </source>
</evidence>
<sequence length="68" mass="8009">MKTQVIIFIMAVVFLQLLSQSEAFIFDLLKKLVGKRELRNIDLDQFDDMFDEPEISAADMRFLQELLK</sequence>
<comment type="function">
    <text evidence="2 4">Antibacterial peptide with activity against both Gram-positive and Gram-negative bacteria probably by forming pores in the cell membrane (By similarity). Also has weak hemolytic activity (By similarity). Does not show antifungal activity (PubMed:27917162).</text>
</comment>
<comment type="subcellular location">
    <subcellularLocation>
        <location evidence="1">Secreted</location>
    </subcellularLocation>
    <subcellularLocation>
        <location evidence="6">Target cell membrane</location>
    </subcellularLocation>
    <text evidence="6">Forms an alpha-helical membrane channel in the prey.</text>
</comment>
<comment type="tissue specificity">
    <text>Expressed by the venom gland.</text>
</comment>
<comment type="similarity">
    <text evidence="6">Belongs to the non-disulfide-bridged peptide (NDBP) superfamily. Short antimicrobial peptide (group 4) family.</text>
</comment>
<reference evidence="8" key="1">
    <citation type="journal article" date="2007" name="BMC Genomics">
        <title>Transcriptome analysis of the venom gland of the Mexican scorpion Hadrurus gertschi (Arachnida: Scorpiones).</title>
        <authorList>
            <person name="Schwartz E.F."/>
            <person name="Diego-Garcia E."/>
            <person name="Rodriguez de la Vega R.C."/>
            <person name="Possani L.D."/>
        </authorList>
    </citation>
    <scope>NUCLEOTIDE SEQUENCE [LARGE SCALE MRNA]</scope>
    <scope>NOMENCLATURE</scope>
    <source>
        <tissue>Venom gland</tissue>
    </source>
</reference>
<reference key="2">
    <citation type="journal article" date="2016" name="Front. Microbiol.">
        <title>Activity of scorpion venom-derived antifungal peptides against planktonic cells of Candida spp. and Cryptococcus neoformans and Candida albicans biofilms.</title>
        <authorList>
            <person name="Guilhelmelli F."/>
            <person name="Vilela N."/>
            <person name="Smidt K.S."/>
            <person name="de Oliveira M.A."/>
            <person name="da Cunha Morales Alvares A."/>
            <person name="Rigonatto M.C."/>
            <person name="da Silva Costa P.H."/>
            <person name="Tavares A.H."/>
            <person name="de Freitas S.M."/>
            <person name="Nicola A.M."/>
            <person name="Franco O.L."/>
            <person name="Derengowski L.D."/>
            <person name="Schwartz E.F."/>
            <person name="Mortari M.R."/>
            <person name="Bocca A.L."/>
            <person name="Albuquerque P."/>
            <person name="Silva-Pereira I."/>
        </authorList>
    </citation>
    <scope>FUNCTION</scope>
    <scope>SYNTHESIS OF 24-33</scope>
</reference>
<keyword id="KW-0165">Cleavage on pair of basic residues</keyword>
<keyword id="KW-0204">Cytolysis</keyword>
<keyword id="KW-0406">Ion transport</keyword>
<keyword id="KW-0472">Membrane</keyword>
<keyword id="KW-0964">Secreted</keyword>
<keyword id="KW-0732">Signal</keyword>
<keyword id="KW-1052">Target cell membrane</keyword>
<keyword id="KW-1053">Target membrane</keyword>
<keyword id="KW-0800">Toxin</keyword>
<keyword id="KW-0812">Transmembrane</keyword>
<keyword id="KW-0813">Transport</keyword>
<organism>
    <name type="scientific">Hoffmannihadrurus gertschi</name>
    <name type="common">Scorpion</name>
    <name type="synonym">Hadrurus gertschi</name>
    <dbReference type="NCBI Taxonomy" id="380989"/>
    <lineage>
        <taxon>Eukaryota</taxon>
        <taxon>Metazoa</taxon>
        <taxon>Ecdysozoa</taxon>
        <taxon>Arthropoda</taxon>
        <taxon>Chelicerata</taxon>
        <taxon>Arachnida</taxon>
        <taxon>Scorpiones</taxon>
        <taxon>Iurida</taxon>
        <taxon>Iuroidea</taxon>
        <taxon>Hadrurus</taxon>
    </lineage>
</organism>
<dbReference type="EMBL" id="EL698902">
    <property type="status" value="NOT_ANNOTATED_CDS"/>
    <property type="molecule type" value="mRNA"/>
</dbReference>
<dbReference type="SMR" id="P0C8W2"/>
<dbReference type="GO" id="GO:0005576">
    <property type="term" value="C:extracellular region"/>
    <property type="evidence" value="ECO:0007669"/>
    <property type="project" value="UniProtKB-SubCell"/>
</dbReference>
<dbReference type="GO" id="GO:0016020">
    <property type="term" value="C:membrane"/>
    <property type="evidence" value="ECO:0007669"/>
    <property type="project" value="UniProtKB-KW"/>
</dbReference>
<dbReference type="GO" id="GO:0044218">
    <property type="term" value="C:other organism cell membrane"/>
    <property type="evidence" value="ECO:0007669"/>
    <property type="project" value="UniProtKB-KW"/>
</dbReference>
<dbReference type="GO" id="GO:0090729">
    <property type="term" value="F:toxin activity"/>
    <property type="evidence" value="ECO:0007669"/>
    <property type="project" value="UniProtKB-KW"/>
</dbReference>
<dbReference type="GO" id="GO:0031640">
    <property type="term" value="P:killing of cells of another organism"/>
    <property type="evidence" value="ECO:0007669"/>
    <property type="project" value="UniProtKB-KW"/>
</dbReference>
<dbReference type="GO" id="GO:0006811">
    <property type="term" value="P:monoatomic ion transport"/>
    <property type="evidence" value="ECO:0007669"/>
    <property type="project" value="UniProtKB-KW"/>
</dbReference>
<accession>P0C8W2</accession>